<evidence type="ECO:0000255" key="1">
    <source>
        <dbReference type="HAMAP-Rule" id="MF_01445"/>
    </source>
</evidence>
<reference key="1">
    <citation type="journal article" date="2009" name="J. Bacteriol.">
        <title>The genome of Burkholderia cenocepacia J2315, an epidemic pathogen of cystic fibrosis patients.</title>
        <authorList>
            <person name="Holden M.T."/>
            <person name="Seth-Smith H.M."/>
            <person name="Crossman L.C."/>
            <person name="Sebaihia M."/>
            <person name="Bentley S.D."/>
            <person name="Cerdeno-Tarraga A.M."/>
            <person name="Thomson N.R."/>
            <person name="Bason N."/>
            <person name="Quail M.A."/>
            <person name="Sharp S."/>
            <person name="Cherevach I."/>
            <person name="Churcher C."/>
            <person name="Goodhead I."/>
            <person name="Hauser H."/>
            <person name="Holroyd N."/>
            <person name="Mungall K."/>
            <person name="Scott P."/>
            <person name="Walker D."/>
            <person name="White B."/>
            <person name="Rose H."/>
            <person name="Iversen P."/>
            <person name="Mil-Homens D."/>
            <person name="Rocha E.P."/>
            <person name="Fialho A.M."/>
            <person name="Baldwin A."/>
            <person name="Dowson C."/>
            <person name="Barrell B.G."/>
            <person name="Govan J.R."/>
            <person name="Vandamme P."/>
            <person name="Hart C.A."/>
            <person name="Mahenthiralingam E."/>
            <person name="Parkhill J."/>
        </authorList>
    </citation>
    <scope>NUCLEOTIDE SEQUENCE [LARGE SCALE GENOMIC DNA]</scope>
    <source>
        <strain>ATCC BAA-245 / DSM 16553 / LMG 16656 / NCTC 13227 / J2315 / CF5610</strain>
    </source>
</reference>
<keyword id="KW-0012">Acyltransferase</keyword>
<keyword id="KW-0963">Cytoplasm</keyword>
<keyword id="KW-0408">Iron</keyword>
<keyword id="KW-0479">Metal-binding</keyword>
<keyword id="KW-0808">Transferase</keyword>
<keyword id="KW-0819">tRNA processing</keyword>
<protein>
    <recommendedName>
        <fullName evidence="1">tRNA N6-adenosine threonylcarbamoyltransferase</fullName>
        <ecNumber evidence="1">2.3.1.234</ecNumber>
    </recommendedName>
    <alternativeName>
        <fullName evidence="1">N6-L-threonylcarbamoyladenine synthase</fullName>
        <shortName evidence="1">t(6)A synthase</shortName>
    </alternativeName>
    <alternativeName>
        <fullName evidence="1">t(6)A37 threonylcarbamoyladenosine biosynthesis protein TsaD</fullName>
    </alternativeName>
    <alternativeName>
        <fullName evidence="1">tRNA threonylcarbamoyladenosine biosynthesis protein TsaD</fullName>
    </alternativeName>
</protein>
<gene>
    <name evidence="1" type="primary">tsaD</name>
    <name type="synonym">gcp</name>
    <name type="ordered locus">BceJ2315_43680</name>
    <name type="ORF">BCAM0913</name>
</gene>
<dbReference type="EC" id="2.3.1.234" evidence="1"/>
<dbReference type="EMBL" id="AM747721">
    <property type="protein sequence ID" value="CAR54770.1"/>
    <property type="molecule type" value="Genomic_DNA"/>
</dbReference>
<dbReference type="RefSeq" id="WP_006486450.1">
    <property type="nucleotide sequence ID" value="NC_011001.1"/>
</dbReference>
<dbReference type="SMR" id="B4EN31"/>
<dbReference type="KEGG" id="bcj:BCAM0913"/>
<dbReference type="eggNOG" id="COG0533">
    <property type="taxonomic scope" value="Bacteria"/>
</dbReference>
<dbReference type="HOGENOM" id="CLU_023208_0_2_4"/>
<dbReference type="BioCyc" id="BCEN216591:G1G1V-4896-MONOMER"/>
<dbReference type="Proteomes" id="UP000001035">
    <property type="component" value="Chromosome 2"/>
</dbReference>
<dbReference type="GO" id="GO:0005737">
    <property type="term" value="C:cytoplasm"/>
    <property type="evidence" value="ECO:0007669"/>
    <property type="project" value="UniProtKB-SubCell"/>
</dbReference>
<dbReference type="GO" id="GO:0005506">
    <property type="term" value="F:iron ion binding"/>
    <property type="evidence" value="ECO:0007669"/>
    <property type="project" value="UniProtKB-UniRule"/>
</dbReference>
<dbReference type="GO" id="GO:0061711">
    <property type="term" value="F:N(6)-L-threonylcarbamoyladenine synthase activity"/>
    <property type="evidence" value="ECO:0007669"/>
    <property type="project" value="UniProtKB-EC"/>
</dbReference>
<dbReference type="GO" id="GO:0002949">
    <property type="term" value="P:tRNA threonylcarbamoyladenosine modification"/>
    <property type="evidence" value="ECO:0007669"/>
    <property type="project" value="UniProtKB-UniRule"/>
</dbReference>
<dbReference type="CDD" id="cd24133">
    <property type="entry name" value="ASKHA_NBD_TsaD_bac"/>
    <property type="match status" value="1"/>
</dbReference>
<dbReference type="FunFam" id="3.30.420.40:FF:000012">
    <property type="entry name" value="tRNA N6-adenosine threonylcarbamoyltransferase"/>
    <property type="match status" value="1"/>
</dbReference>
<dbReference type="FunFam" id="3.30.420.40:FF:000040">
    <property type="entry name" value="tRNA N6-adenosine threonylcarbamoyltransferase"/>
    <property type="match status" value="1"/>
</dbReference>
<dbReference type="Gene3D" id="3.30.420.40">
    <property type="match status" value="2"/>
</dbReference>
<dbReference type="HAMAP" id="MF_01445">
    <property type="entry name" value="TsaD"/>
    <property type="match status" value="1"/>
</dbReference>
<dbReference type="InterPro" id="IPR043129">
    <property type="entry name" value="ATPase_NBD"/>
</dbReference>
<dbReference type="InterPro" id="IPR000905">
    <property type="entry name" value="Gcp-like_dom"/>
</dbReference>
<dbReference type="InterPro" id="IPR017861">
    <property type="entry name" value="KAE1/TsaD"/>
</dbReference>
<dbReference type="InterPro" id="IPR022450">
    <property type="entry name" value="TsaD"/>
</dbReference>
<dbReference type="NCBIfam" id="TIGR00329">
    <property type="entry name" value="gcp_kae1"/>
    <property type="match status" value="1"/>
</dbReference>
<dbReference type="NCBIfam" id="TIGR03723">
    <property type="entry name" value="T6A_TsaD_YgjD"/>
    <property type="match status" value="1"/>
</dbReference>
<dbReference type="PANTHER" id="PTHR11735">
    <property type="entry name" value="TRNA N6-ADENOSINE THREONYLCARBAMOYLTRANSFERASE"/>
    <property type="match status" value="1"/>
</dbReference>
<dbReference type="PANTHER" id="PTHR11735:SF6">
    <property type="entry name" value="TRNA N6-ADENOSINE THREONYLCARBAMOYLTRANSFERASE, MITOCHONDRIAL"/>
    <property type="match status" value="1"/>
</dbReference>
<dbReference type="Pfam" id="PF00814">
    <property type="entry name" value="TsaD"/>
    <property type="match status" value="1"/>
</dbReference>
<dbReference type="PRINTS" id="PR00789">
    <property type="entry name" value="OSIALOPTASE"/>
</dbReference>
<dbReference type="SUPFAM" id="SSF53067">
    <property type="entry name" value="Actin-like ATPase domain"/>
    <property type="match status" value="2"/>
</dbReference>
<sequence>MLVLGIESSCDETGLALYDTQRGLLAHALHSQIAMHRDYGGVVPELASRDHIRRALPLLEEVMAQSGTRRDDIDAIAFTQGPGLAGALLVGASIANALALAWNKPTVGIHHLEGHLLSPLLVDAPPPFPFVALLVSGGHTQLMRVTDVGVYETLGETLDDAAGEAFDKTAKLIGLGYPGGPEVSKLAETGTPGAVVLPRPMLHSGDLDFSFSGLKTAVLTQMKKFEAAKFDGEALERAKADLARGFVDAAVDVLVAKSLAALKKTKLKRLVVAGGVGANRQLRAALSAAAAKRGFDVHYPDLALCTDNGAMIALAGALRLGRWPEQANADYAFTVKPRWDLASLAG</sequence>
<organism>
    <name type="scientific">Burkholderia cenocepacia (strain ATCC BAA-245 / DSM 16553 / LMG 16656 / NCTC 13227 / J2315 / CF5610)</name>
    <name type="common">Burkholderia cepacia (strain J2315)</name>
    <dbReference type="NCBI Taxonomy" id="216591"/>
    <lineage>
        <taxon>Bacteria</taxon>
        <taxon>Pseudomonadati</taxon>
        <taxon>Pseudomonadota</taxon>
        <taxon>Betaproteobacteria</taxon>
        <taxon>Burkholderiales</taxon>
        <taxon>Burkholderiaceae</taxon>
        <taxon>Burkholderia</taxon>
        <taxon>Burkholderia cepacia complex</taxon>
    </lineage>
</organism>
<comment type="function">
    <text evidence="1">Required for the formation of a threonylcarbamoyl group on adenosine at position 37 (t(6)A37) in tRNAs that read codons beginning with adenine. Is involved in the transfer of the threonylcarbamoyl moiety of threonylcarbamoyl-AMP (TC-AMP) to the N6 group of A37, together with TsaE and TsaB. TsaD likely plays a direct catalytic role in this reaction.</text>
</comment>
<comment type="catalytic activity">
    <reaction evidence="1">
        <text>L-threonylcarbamoyladenylate + adenosine(37) in tRNA = N(6)-L-threonylcarbamoyladenosine(37) in tRNA + AMP + H(+)</text>
        <dbReference type="Rhea" id="RHEA:37059"/>
        <dbReference type="Rhea" id="RHEA-COMP:10162"/>
        <dbReference type="Rhea" id="RHEA-COMP:10163"/>
        <dbReference type="ChEBI" id="CHEBI:15378"/>
        <dbReference type="ChEBI" id="CHEBI:73682"/>
        <dbReference type="ChEBI" id="CHEBI:74411"/>
        <dbReference type="ChEBI" id="CHEBI:74418"/>
        <dbReference type="ChEBI" id="CHEBI:456215"/>
        <dbReference type="EC" id="2.3.1.234"/>
    </reaction>
</comment>
<comment type="cofactor">
    <cofactor evidence="1">
        <name>Fe(2+)</name>
        <dbReference type="ChEBI" id="CHEBI:29033"/>
    </cofactor>
    <text evidence="1">Binds 1 Fe(2+) ion per subunit.</text>
</comment>
<comment type="subcellular location">
    <subcellularLocation>
        <location evidence="1">Cytoplasm</location>
    </subcellularLocation>
</comment>
<comment type="similarity">
    <text evidence="1">Belongs to the KAE1 / TsaD family.</text>
</comment>
<name>TSAD_BURCJ</name>
<accession>B4EN31</accession>
<proteinExistence type="inferred from homology"/>
<feature type="chain" id="PRO_1000145956" description="tRNA N6-adenosine threonylcarbamoyltransferase">
    <location>
        <begin position="1"/>
        <end position="346"/>
    </location>
</feature>
<feature type="binding site" evidence="1">
    <location>
        <position position="111"/>
    </location>
    <ligand>
        <name>Fe cation</name>
        <dbReference type="ChEBI" id="CHEBI:24875"/>
    </ligand>
</feature>
<feature type="binding site" evidence="1">
    <location>
        <position position="115"/>
    </location>
    <ligand>
        <name>Fe cation</name>
        <dbReference type="ChEBI" id="CHEBI:24875"/>
    </ligand>
</feature>
<feature type="binding site" evidence="1">
    <location>
        <begin position="134"/>
        <end position="138"/>
    </location>
    <ligand>
        <name>substrate</name>
    </ligand>
</feature>
<feature type="binding site" evidence="1">
    <location>
        <position position="167"/>
    </location>
    <ligand>
        <name>substrate</name>
    </ligand>
</feature>
<feature type="binding site" evidence="1">
    <location>
        <position position="180"/>
    </location>
    <ligand>
        <name>substrate</name>
    </ligand>
</feature>
<feature type="binding site" evidence="1">
    <location>
        <position position="279"/>
    </location>
    <ligand>
        <name>substrate</name>
    </ligand>
</feature>
<feature type="binding site" evidence="1">
    <location>
        <position position="307"/>
    </location>
    <ligand>
        <name>Fe cation</name>
        <dbReference type="ChEBI" id="CHEBI:24875"/>
    </ligand>
</feature>